<gene>
    <name evidence="1" type="primary">fabA</name>
    <name type="ordered locus">EcolC_2642</name>
</gene>
<organism>
    <name type="scientific">Escherichia coli (strain ATCC 8739 / DSM 1576 / NBRC 3972 / NCIMB 8545 / WDCM 00012 / Crooks)</name>
    <dbReference type="NCBI Taxonomy" id="481805"/>
    <lineage>
        <taxon>Bacteria</taxon>
        <taxon>Pseudomonadati</taxon>
        <taxon>Pseudomonadota</taxon>
        <taxon>Gammaproteobacteria</taxon>
        <taxon>Enterobacterales</taxon>
        <taxon>Enterobacteriaceae</taxon>
        <taxon>Escherichia</taxon>
    </lineage>
</organism>
<feature type="chain" id="PRO_1000080427" description="3-hydroxydecanoyl-[acyl-carrier-protein] dehydratase">
    <location>
        <begin position="1"/>
        <end position="172"/>
    </location>
</feature>
<feature type="active site" evidence="1">
    <location>
        <position position="71"/>
    </location>
</feature>
<dbReference type="EC" id="4.2.1.59" evidence="1"/>
<dbReference type="EC" id="5.3.3.14" evidence="1"/>
<dbReference type="EMBL" id="CP000946">
    <property type="protein sequence ID" value="ACA78272.1"/>
    <property type="molecule type" value="Genomic_DNA"/>
</dbReference>
<dbReference type="RefSeq" id="WP_000227927.1">
    <property type="nucleotide sequence ID" value="NZ_MTFT01000009.1"/>
</dbReference>
<dbReference type="SMR" id="B1IVX8"/>
<dbReference type="GeneID" id="93776460"/>
<dbReference type="KEGG" id="ecl:EcolC_2642"/>
<dbReference type="HOGENOM" id="CLU_097925_0_0_6"/>
<dbReference type="UniPathway" id="UPA00094"/>
<dbReference type="GO" id="GO:0005737">
    <property type="term" value="C:cytoplasm"/>
    <property type="evidence" value="ECO:0007669"/>
    <property type="project" value="UniProtKB-SubCell"/>
</dbReference>
<dbReference type="GO" id="GO:0019171">
    <property type="term" value="F:(3R)-hydroxyacyl-[acyl-carrier-protein] dehydratase activity"/>
    <property type="evidence" value="ECO:0007669"/>
    <property type="project" value="UniProtKB-UniRule"/>
</dbReference>
<dbReference type="GO" id="GO:0034017">
    <property type="term" value="F:trans-2-decenoyl-acyl-carrier-protein isomerase activity"/>
    <property type="evidence" value="ECO:0007669"/>
    <property type="project" value="UniProtKB-UniRule"/>
</dbReference>
<dbReference type="GO" id="GO:0006636">
    <property type="term" value="P:unsaturated fatty acid biosynthetic process"/>
    <property type="evidence" value="ECO:0007669"/>
    <property type="project" value="UniProtKB-UniRule"/>
</dbReference>
<dbReference type="CDD" id="cd01287">
    <property type="entry name" value="FabA"/>
    <property type="match status" value="1"/>
</dbReference>
<dbReference type="FunFam" id="3.10.129.10:FF:000003">
    <property type="entry name" value="3-hydroxydecanoyl-[acyl-carrier-protein] dehydratase"/>
    <property type="match status" value="1"/>
</dbReference>
<dbReference type="Gene3D" id="3.10.129.10">
    <property type="entry name" value="Hotdog Thioesterase"/>
    <property type="match status" value="1"/>
</dbReference>
<dbReference type="HAMAP" id="MF_00405">
    <property type="entry name" value="FabA"/>
    <property type="match status" value="1"/>
</dbReference>
<dbReference type="InterPro" id="IPR010083">
    <property type="entry name" value="FabA"/>
</dbReference>
<dbReference type="InterPro" id="IPR013114">
    <property type="entry name" value="FabA_FabZ"/>
</dbReference>
<dbReference type="InterPro" id="IPR029069">
    <property type="entry name" value="HotDog_dom_sf"/>
</dbReference>
<dbReference type="NCBIfam" id="TIGR01749">
    <property type="entry name" value="fabA"/>
    <property type="match status" value="1"/>
</dbReference>
<dbReference type="NCBIfam" id="NF003509">
    <property type="entry name" value="PRK05174.1"/>
    <property type="match status" value="1"/>
</dbReference>
<dbReference type="PANTHER" id="PTHR30272">
    <property type="entry name" value="3-HYDROXYACYL-[ACYL-CARRIER-PROTEIN] DEHYDRATASE"/>
    <property type="match status" value="1"/>
</dbReference>
<dbReference type="PANTHER" id="PTHR30272:SF8">
    <property type="entry name" value="3-HYDROXYDECANOYL-[ACYL-CARRIER-PROTEIN] DEHYDRATASE"/>
    <property type="match status" value="1"/>
</dbReference>
<dbReference type="Pfam" id="PF07977">
    <property type="entry name" value="FabA"/>
    <property type="match status" value="1"/>
</dbReference>
<dbReference type="SUPFAM" id="SSF54637">
    <property type="entry name" value="Thioesterase/thiol ester dehydrase-isomerase"/>
    <property type="match status" value="1"/>
</dbReference>
<evidence type="ECO:0000255" key="1">
    <source>
        <dbReference type="HAMAP-Rule" id="MF_00405"/>
    </source>
</evidence>
<sequence>MVDKRESYTKEDLLASGRGELFGAKGPQLPAPNMLMMDRVVKMTETGGNFDKGYVEAELDINPDLWFFGCHFIGDPVMPGCLGLDAMWQLVGFYLGWLGGEGKGRALGVGEVKFTGQVLPTAKKVTYRIHFKRIVNRRLIMGLADGEVLVDGRLIYTASDLKVGLFQDTSAF</sequence>
<proteinExistence type="inferred from homology"/>
<accession>B1IVX8</accession>
<reference key="1">
    <citation type="submission" date="2008-02" db="EMBL/GenBank/DDBJ databases">
        <title>Complete sequence of Escherichia coli C str. ATCC 8739.</title>
        <authorList>
            <person name="Copeland A."/>
            <person name="Lucas S."/>
            <person name="Lapidus A."/>
            <person name="Glavina del Rio T."/>
            <person name="Dalin E."/>
            <person name="Tice H."/>
            <person name="Bruce D."/>
            <person name="Goodwin L."/>
            <person name="Pitluck S."/>
            <person name="Kiss H."/>
            <person name="Brettin T."/>
            <person name="Detter J.C."/>
            <person name="Han C."/>
            <person name="Kuske C.R."/>
            <person name="Schmutz J."/>
            <person name="Larimer F."/>
            <person name="Land M."/>
            <person name="Hauser L."/>
            <person name="Kyrpides N."/>
            <person name="Mikhailova N."/>
            <person name="Ingram L."/>
            <person name="Richardson P."/>
        </authorList>
    </citation>
    <scope>NUCLEOTIDE SEQUENCE [LARGE SCALE GENOMIC DNA]</scope>
    <source>
        <strain>ATCC 8739 / DSM 1576 / NBRC 3972 / NCIMB 8545 / WDCM 00012 / Crooks</strain>
    </source>
</reference>
<protein>
    <recommendedName>
        <fullName evidence="1">3-hydroxydecanoyl-[acyl-carrier-protein] dehydratase</fullName>
        <ecNumber evidence="1">4.2.1.59</ecNumber>
    </recommendedName>
    <alternativeName>
        <fullName evidence="1">3-hydroxyacyl-[acyl-carrier-protein] dehydratase FabA</fullName>
    </alternativeName>
    <alternativeName>
        <fullName evidence="1">Beta-hydroxydecanoyl thioester dehydrase</fullName>
    </alternativeName>
    <alternativeName>
        <fullName evidence="1">Trans-2-decenoyl-[acyl-carrier-protein] isomerase</fullName>
        <ecNumber evidence="1">5.3.3.14</ecNumber>
    </alternativeName>
</protein>
<name>FABA_ECOLC</name>
<comment type="function">
    <text evidence="1">Necessary for the introduction of cis unsaturation into fatty acids. Catalyzes the dehydration of (3R)-3-hydroxydecanoyl-ACP to E-(2)-decenoyl-ACP and then its isomerization to Z-(3)-decenoyl-ACP. Can catalyze the dehydratase reaction for beta-hydroxyacyl-ACPs with saturated chain lengths up to 16:0, being most active on intermediate chain length.</text>
</comment>
<comment type="catalytic activity">
    <reaction evidence="1">
        <text>a (3R)-hydroxyacyl-[ACP] = a (2E)-enoyl-[ACP] + H2O</text>
        <dbReference type="Rhea" id="RHEA:13097"/>
        <dbReference type="Rhea" id="RHEA-COMP:9925"/>
        <dbReference type="Rhea" id="RHEA-COMP:9945"/>
        <dbReference type="ChEBI" id="CHEBI:15377"/>
        <dbReference type="ChEBI" id="CHEBI:78784"/>
        <dbReference type="ChEBI" id="CHEBI:78827"/>
        <dbReference type="EC" id="4.2.1.59"/>
    </reaction>
</comment>
<comment type="catalytic activity">
    <reaction evidence="1">
        <text>(3R)-hydroxydecanoyl-[ACP] = (2E)-decenoyl-[ACP] + H2O</text>
        <dbReference type="Rhea" id="RHEA:41860"/>
        <dbReference type="Rhea" id="RHEA-COMP:9638"/>
        <dbReference type="Rhea" id="RHEA-COMP:9639"/>
        <dbReference type="ChEBI" id="CHEBI:15377"/>
        <dbReference type="ChEBI" id="CHEBI:78466"/>
        <dbReference type="ChEBI" id="CHEBI:78467"/>
    </reaction>
</comment>
<comment type="catalytic activity">
    <reaction evidence="1">
        <text>(2E)-decenoyl-[ACP] = (3Z)-decenoyl-[ACP]</text>
        <dbReference type="Rhea" id="RHEA:23568"/>
        <dbReference type="Rhea" id="RHEA-COMP:9639"/>
        <dbReference type="Rhea" id="RHEA-COMP:9927"/>
        <dbReference type="ChEBI" id="CHEBI:78467"/>
        <dbReference type="ChEBI" id="CHEBI:78798"/>
        <dbReference type="EC" id="5.3.3.14"/>
    </reaction>
</comment>
<comment type="pathway">
    <text evidence="1">Lipid metabolism; fatty acid biosynthesis.</text>
</comment>
<comment type="subunit">
    <text evidence="1">Homodimer.</text>
</comment>
<comment type="subcellular location">
    <subcellularLocation>
        <location evidence="1">Cytoplasm</location>
    </subcellularLocation>
</comment>
<comment type="similarity">
    <text evidence="1">Belongs to the thioester dehydratase family. FabA subfamily.</text>
</comment>
<keyword id="KW-0963">Cytoplasm</keyword>
<keyword id="KW-0275">Fatty acid biosynthesis</keyword>
<keyword id="KW-0276">Fatty acid metabolism</keyword>
<keyword id="KW-0413">Isomerase</keyword>
<keyword id="KW-0444">Lipid biosynthesis</keyword>
<keyword id="KW-0443">Lipid metabolism</keyword>
<keyword id="KW-0456">Lyase</keyword>